<evidence type="ECO:0000255" key="1">
    <source>
        <dbReference type="HAMAP-Rule" id="MF_01870"/>
    </source>
</evidence>
<protein>
    <recommendedName>
        <fullName evidence="1">Probable 4-deoxy-4-formamido-L-arabinose-phosphoundecaprenol deformylase ArnD</fullName>
        <ecNumber evidence="1">3.5.1.n3</ecNumber>
    </recommendedName>
</protein>
<name>ARND_YERE8</name>
<gene>
    <name evidence="1" type="primary">arnD</name>
    <name type="ordered locus">YE2189</name>
</gene>
<accession>A1JPN1</accession>
<keyword id="KW-0046">Antibiotic resistance</keyword>
<keyword id="KW-0378">Hydrolase</keyword>
<keyword id="KW-0441">Lipid A biosynthesis</keyword>
<keyword id="KW-0444">Lipid biosynthesis</keyword>
<keyword id="KW-0443">Lipid metabolism</keyword>
<keyword id="KW-0448">Lipopolysaccharide biosynthesis</keyword>
<dbReference type="EC" id="3.5.1.n3" evidence="1"/>
<dbReference type="EMBL" id="AM286415">
    <property type="protein sequence ID" value="CAL12259.1"/>
    <property type="molecule type" value="Genomic_DNA"/>
</dbReference>
<dbReference type="RefSeq" id="WP_005169389.1">
    <property type="nucleotide sequence ID" value="NC_008800.1"/>
</dbReference>
<dbReference type="RefSeq" id="YP_001006429.1">
    <property type="nucleotide sequence ID" value="NC_008800.1"/>
</dbReference>
<dbReference type="SMR" id="A1JPN1"/>
<dbReference type="KEGG" id="yen:YE2189"/>
<dbReference type="PATRIC" id="fig|393305.7.peg.2354"/>
<dbReference type="eggNOG" id="COG0726">
    <property type="taxonomic scope" value="Bacteria"/>
</dbReference>
<dbReference type="HOGENOM" id="CLU_084199_0_0_6"/>
<dbReference type="OrthoDB" id="5589314at2"/>
<dbReference type="UniPathway" id="UPA00030"/>
<dbReference type="UniPathway" id="UPA00036">
    <property type="reaction ID" value="UER00496"/>
</dbReference>
<dbReference type="Proteomes" id="UP000000642">
    <property type="component" value="Chromosome"/>
</dbReference>
<dbReference type="GO" id="GO:0016020">
    <property type="term" value="C:membrane"/>
    <property type="evidence" value="ECO:0007669"/>
    <property type="project" value="GOC"/>
</dbReference>
<dbReference type="GO" id="GO:0016811">
    <property type="term" value="F:hydrolase activity, acting on carbon-nitrogen (but not peptide) bonds, in linear amides"/>
    <property type="evidence" value="ECO:0007669"/>
    <property type="project" value="UniProtKB-UniRule"/>
</dbReference>
<dbReference type="GO" id="GO:0036108">
    <property type="term" value="P:4-amino-4-deoxy-alpha-L-arabinopyranosyl undecaprenyl phosphate biosynthetic process"/>
    <property type="evidence" value="ECO:0007669"/>
    <property type="project" value="UniProtKB-UniRule"/>
</dbReference>
<dbReference type="GO" id="GO:0009245">
    <property type="term" value="P:lipid A biosynthetic process"/>
    <property type="evidence" value="ECO:0007669"/>
    <property type="project" value="UniProtKB-UniRule"/>
</dbReference>
<dbReference type="GO" id="GO:0009103">
    <property type="term" value="P:lipopolysaccharide biosynthetic process"/>
    <property type="evidence" value="ECO:0007669"/>
    <property type="project" value="UniProtKB-UniRule"/>
</dbReference>
<dbReference type="GO" id="GO:0046677">
    <property type="term" value="P:response to antibiotic"/>
    <property type="evidence" value="ECO:0007669"/>
    <property type="project" value="UniProtKB-KW"/>
</dbReference>
<dbReference type="CDD" id="cd10939">
    <property type="entry name" value="CE4_ArnD"/>
    <property type="match status" value="1"/>
</dbReference>
<dbReference type="Gene3D" id="3.20.20.370">
    <property type="entry name" value="Glycoside hydrolase/deacetylase"/>
    <property type="match status" value="1"/>
</dbReference>
<dbReference type="HAMAP" id="MF_01870">
    <property type="entry name" value="ArnD"/>
    <property type="match status" value="1"/>
</dbReference>
<dbReference type="InterPro" id="IPR023557">
    <property type="entry name" value="ArnD"/>
</dbReference>
<dbReference type="InterPro" id="IPR011330">
    <property type="entry name" value="Glyco_hydro/deAcase_b/a-brl"/>
</dbReference>
<dbReference type="InterPro" id="IPR002509">
    <property type="entry name" value="NODB_dom"/>
</dbReference>
<dbReference type="InterPro" id="IPR050248">
    <property type="entry name" value="Polysacc_deacetylase_ArnD"/>
</dbReference>
<dbReference type="NCBIfam" id="NF011923">
    <property type="entry name" value="PRK15394.1"/>
    <property type="match status" value="1"/>
</dbReference>
<dbReference type="PANTHER" id="PTHR10587:SF137">
    <property type="entry name" value="4-DEOXY-4-FORMAMIDO-L-ARABINOSE-PHOSPHOUNDECAPRENOL DEFORMYLASE ARND-RELATED"/>
    <property type="match status" value="1"/>
</dbReference>
<dbReference type="PANTHER" id="PTHR10587">
    <property type="entry name" value="GLYCOSYL TRANSFERASE-RELATED"/>
    <property type="match status" value="1"/>
</dbReference>
<dbReference type="Pfam" id="PF01522">
    <property type="entry name" value="Polysacc_deac_1"/>
    <property type="match status" value="1"/>
</dbReference>
<dbReference type="SUPFAM" id="SSF88713">
    <property type="entry name" value="Glycoside hydrolase/deacetylase"/>
    <property type="match status" value="1"/>
</dbReference>
<dbReference type="PROSITE" id="PS51677">
    <property type="entry name" value="NODB"/>
    <property type="match status" value="1"/>
</dbReference>
<organism>
    <name type="scientific">Yersinia enterocolitica serotype O:8 / biotype 1B (strain NCTC 13174 / 8081)</name>
    <dbReference type="NCBI Taxonomy" id="393305"/>
    <lineage>
        <taxon>Bacteria</taxon>
        <taxon>Pseudomonadati</taxon>
        <taxon>Pseudomonadota</taxon>
        <taxon>Gammaproteobacteria</taxon>
        <taxon>Enterobacterales</taxon>
        <taxon>Yersiniaceae</taxon>
        <taxon>Yersinia</taxon>
    </lineage>
</organism>
<sequence>MKQVGLRIDVDTYRGTKEGVPSLLAVLEKHDISASFFFSVGPDNMGRHLWRLFRPRFLWKMLRSNAASLYGWDILLAGTAWPGKQIAKDFGPLMKATLQAGHEVGLHAWDHQGWQAKVATWSEQQLTEQVQLGIDALQHSIQQPVTCSAAAGWRADERVLAVKQLFSFSYNSDCRGTHPFRPLLPDGSIGSVQIPVTLPTYDEVVGSEVRTEDFNNFIINAISHDNGVPVYTIHAEVEGMSQALMFDQLLVMAKERGIQFCALGSLLPKNLDSLPVGKVVRAAFPGREGWLGCQSALEDA</sequence>
<comment type="function">
    <text evidence="1">Catalyzes the deformylation of 4-deoxy-4-formamido-L-arabinose-phosphoundecaprenol to 4-amino-4-deoxy-L-arabinose-phosphoundecaprenol. The modified arabinose is attached to lipid A and is required for resistance to polymyxin and cationic antimicrobial peptides.</text>
</comment>
<comment type="catalytic activity">
    <reaction evidence="1">
        <text>4-deoxy-4-formamido-alpha-L-arabinopyranosyl di-trans,octa-cis-undecaprenyl phosphate + H2O = 4-amino-4-deoxy-alpha-L-arabinopyranosyl di-trans,octa-cis-undecaprenyl phosphate + formate</text>
        <dbReference type="Rhea" id="RHEA:27734"/>
        <dbReference type="ChEBI" id="CHEBI:15377"/>
        <dbReference type="ChEBI" id="CHEBI:15740"/>
        <dbReference type="ChEBI" id="CHEBI:58909"/>
        <dbReference type="ChEBI" id="CHEBI:60463"/>
        <dbReference type="EC" id="3.5.1.n3"/>
    </reaction>
</comment>
<comment type="pathway">
    <text evidence="1">Glycolipid biosynthesis; 4-amino-4-deoxy-alpha-L-arabinose undecaprenyl phosphate biosynthesis; 4-amino-4-deoxy-alpha-L-arabinose undecaprenyl phosphate from UDP-4-deoxy-4-formamido-beta-L-arabinose and undecaprenyl phosphate: step 2/2.</text>
</comment>
<comment type="pathway">
    <text evidence="1">Bacterial outer membrane biogenesis; lipopolysaccharide biosynthesis.</text>
</comment>
<comment type="similarity">
    <text evidence="1">Belongs to the polysaccharide deacetylase family. ArnD deformylase subfamily.</text>
</comment>
<proteinExistence type="inferred from homology"/>
<feature type="chain" id="PRO_0000383550" description="Probable 4-deoxy-4-formamido-L-arabinose-phosphoundecaprenol deformylase ArnD">
    <location>
        <begin position="1"/>
        <end position="300"/>
    </location>
</feature>
<feature type="domain" description="NodB homology" evidence="1">
    <location>
        <begin position="2"/>
        <end position="261"/>
    </location>
</feature>
<reference key="1">
    <citation type="journal article" date="2006" name="PLoS Genet.">
        <title>The complete genome sequence and comparative genome analysis of the high pathogenicity Yersinia enterocolitica strain 8081.</title>
        <authorList>
            <person name="Thomson N.R."/>
            <person name="Howard S."/>
            <person name="Wren B.W."/>
            <person name="Holden M.T.G."/>
            <person name="Crossman L."/>
            <person name="Challis G.L."/>
            <person name="Churcher C."/>
            <person name="Mungall K."/>
            <person name="Brooks K."/>
            <person name="Chillingworth T."/>
            <person name="Feltwell T."/>
            <person name="Abdellah Z."/>
            <person name="Hauser H."/>
            <person name="Jagels K."/>
            <person name="Maddison M."/>
            <person name="Moule S."/>
            <person name="Sanders M."/>
            <person name="Whitehead S."/>
            <person name="Quail M.A."/>
            <person name="Dougan G."/>
            <person name="Parkhill J."/>
            <person name="Prentice M.B."/>
        </authorList>
    </citation>
    <scope>NUCLEOTIDE SEQUENCE [LARGE SCALE GENOMIC DNA]</scope>
    <source>
        <strain>NCTC 13174 / 8081</strain>
    </source>
</reference>